<dbReference type="EMBL" id="BA000026">
    <property type="protein sequence ID" value="BAC44793.1"/>
    <property type="molecule type" value="Genomic_DNA"/>
</dbReference>
<dbReference type="RefSeq" id="WP_011077821.1">
    <property type="nucleotide sequence ID" value="NC_004432.1"/>
</dbReference>
<dbReference type="SMR" id="Q8EUC3"/>
<dbReference type="FunCoup" id="Q8EUC3">
    <property type="interactions" value="245"/>
</dbReference>
<dbReference type="STRING" id="272633.gene:10732127"/>
<dbReference type="KEGG" id="mpe:MYPE10070"/>
<dbReference type="eggNOG" id="COG0093">
    <property type="taxonomic scope" value="Bacteria"/>
</dbReference>
<dbReference type="HOGENOM" id="CLU_095071_2_1_14"/>
<dbReference type="InParanoid" id="Q8EUC3"/>
<dbReference type="Proteomes" id="UP000002522">
    <property type="component" value="Chromosome"/>
</dbReference>
<dbReference type="GO" id="GO:0022625">
    <property type="term" value="C:cytosolic large ribosomal subunit"/>
    <property type="evidence" value="ECO:0007669"/>
    <property type="project" value="TreeGrafter"/>
</dbReference>
<dbReference type="GO" id="GO:0070180">
    <property type="term" value="F:large ribosomal subunit rRNA binding"/>
    <property type="evidence" value="ECO:0007669"/>
    <property type="project" value="TreeGrafter"/>
</dbReference>
<dbReference type="GO" id="GO:0003735">
    <property type="term" value="F:structural constituent of ribosome"/>
    <property type="evidence" value="ECO:0007669"/>
    <property type="project" value="InterPro"/>
</dbReference>
<dbReference type="GO" id="GO:0006412">
    <property type="term" value="P:translation"/>
    <property type="evidence" value="ECO:0007669"/>
    <property type="project" value="UniProtKB-UniRule"/>
</dbReference>
<dbReference type="CDD" id="cd00337">
    <property type="entry name" value="Ribosomal_uL14"/>
    <property type="match status" value="1"/>
</dbReference>
<dbReference type="Gene3D" id="2.40.150.20">
    <property type="entry name" value="Ribosomal protein L14"/>
    <property type="match status" value="1"/>
</dbReference>
<dbReference type="HAMAP" id="MF_01367">
    <property type="entry name" value="Ribosomal_uL14"/>
    <property type="match status" value="1"/>
</dbReference>
<dbReference type="InterPro" id="IPR000218">
    <property type="entry name" value="Ribosomal_uL14"/>
</dbReference>
<dbReference type="InterPro" id="IPR005745">
    <property type="entry name" value="Ribosomal_uL14_bac-type"/>
</dbReference>
<dbReference type="InterPro" id="IPR019972">
    <property type="entry name" value="Ribosomal_uL14_CS"/>
</dbReference>
<dbReference type="InterPro" id="IPR036853">
    <property type="entry name" value="Ribosomal_uL14_sf"/>
</dbReference>
<dbReference type="NCBIfam" id="TIGR01067">
    <property type="entry name" value="rplN_bact"/>
    <property type="match status" value="1"/>
</dbReference>
<dbReference type="PANTHER" id="PTHR11761">
    <property type="entry name" value="50S/60S RIBOSOMAL PROTEIN L14/L23"/>
    <property type="match status" value="1"/>
</dbReference>
<dbReference type="PANTHER" id="PTHR11761:SF3">
    <property type="entry name" value="LARGE RIBOSOMAL SUBUNIT PROTEIN UL14M"/>
    <property type="match status" value="1"/>
</dbReference>
<dbReference type="Pfam" id="PF00238">
    <property type="entry name" value="Ribosomal_L14"/>
    <property type="match status" value="1"/>
</dbReference>
<dbReference type="SMART" id="SM01374">
    <property type="entry name" value="Ribosomal_L14"/>
    <property type="match status" value="1"/>
</dbReference>
<dbReference type="SUPFAM" id="SSF50193">
    <property type="entry name" value="Ribosomal protein L14"/>
    <property type="match status" value="1"/>
</dbReference>
<dbReference type="PROSITE" id="PS00049">
    <property type="entry name" value="RIBOSOMAL_L14"/>
    <property type="match status" value="1"/>
</dbReference>
<gene>
    <name evidence="1" type="primary">rplN</name>
    <name type="ordered locus">MYPE10070</name>
</gene>
<feature type="chain" id="PRO_1000055640" description="Large ribosomal subunit protein uL14">
    <location>
        <begin position="1"/>
        <end position="122"/>
    </location>
</feature>
<name>RL14_MALP2</name>
<keyword id="KW-1185">Reference proteome</keyword>
<keyword id="KW-0687">Ribonucleoprotein</keyword>
<keyword id="KW-0689">Ribosomal protein</keyword>
<keyword id="KW-0694">RNA-binding</keyword>
<keyword id="KW-0699">rRNA-binding</keyword>
<sequence length="122" mass="13184">MIQFMTKLNVADNTGAKQVGVIKVLGGTKRRYASVGDIVVVSVKKAQPDGIVRKGQVCKAVIVRVKKNITRSSGNSLSFDDNACVIIKEDKTPRGSRIFGPVARELRDKGFSKIVSLAPEVL</sequence>
<organism>
    <name type="scientific">Malacoplasma penetrans (strain HF-2)</name>
    <name type="common">Mycoplasma penetrans</name>
    <dbReference type="NCBI Taxonomy" id="272633"/>
    <lineage>
        <taxon>Bacteria</taxon>
        <taxon>Bacillati</taxon>
        <taxon>Mycoplasmatota</taxon>
        <taxon>Mycoplasmoidales</taxon>
        <taxon>Mycoplasmoidaceae</taxon>
        <taxon>Malacoplasma</taxon>
    </lineage>
</organism>
<comment type="function">
    <text evidence="1">Binds to 23S rRNA. Forms part of two intersubunit bridges in the 70S ribosome.</text>
</comment>
<comment type="subunit">
    <text evidence="1">Part of the 50S ribosomal subunit. Forms a cluster with proteins L3 and L19. In the 70S ribosome, L14 and L19 interact and together make contacts with the 16S rRNA in bridges B5 and B8.</text>
</comment>
<comment type="similarity">
    <text evidence="1">Belongs to the universal ribosomal protein uL14 family.</text>
</comment>
<proteinExistence type="inferred from homology"/>
<reference key="1">
    <citation type="journal article" date="2002" name="Nucleic Acids Res.">
        <title>The complete genomic sequence of Mycoplasma penetrans, an intracellular bacterial pathogen in humans.</title>
        <authorList>
            <person name="Sasaki Y."/>
            <person name="Ishikawa J."/>
            <person name="Yamashita A."/>
            <person name="Oshima K."/>
            <person name="Kenri T."/>
            <person name="Furuya K."/>
            <person name="Yoshino C."/>
            <person name="Horino A."/>
            <person name="Shiba T."/>
            <person name="Sasaki T."/>
            <person name="Hattori M."/>
        </authorList>
    </citation>
    <scope>NUCLEOTIDE SEQUENCE [LARGE SCALE GENOMIC DNA]</scope>
    <source>
        <strain>HF-2</strain>
    </source>
</reference>
<evidence type="ECO:0000255" key="1">
    <source>
        <dbReference type="HAMAP-Rule" id="MF_01367"/>
    </source>
</evidence>
<evidence type="ECO:0000305" key="2"/>
<accession>Q8EUC3</accession>
<protein>
    <recommendedName>
        <fullName evidence="1">Large ribosomal subunit protein uL14</fullName>
    </recommendedName>
    <alternativeName>
        <fullName evidence="2">50S ribosomal protein L14</fullName>
    </alternativeName>
</protein>